<name>FER_PYRIL</name>
<protein>
    <recommendedName>
        <fullName>Ferredoxin</fullName>
    </recommendedName>
    <alternativeName>
        <fullName>Seven-iron ferredoxin</fullName>
    </alternativeName>
</protein>
<gene>
    <name type="ordered locus">Pisl_1904</name>
</gene>
<keyword id="KW-0003">3Fe-4S</keyword>
<keyword id="KW-0004">4Fe-4S</keyword>
<keyword id="KW-0903">Direct protein sequencing</keyword>
<keyword id="KW-0249">Electron transport</keyword>
<keyword id="KW-0408">Iron</keyword>
<keyword id="KW-0411">Iron-sulfur</keyword>
<keyword id="KW-0479">Metal-binding</keyword>
<keyword id="KW-0677">Repeat</keyword>
<keyword id="KW-0813">Transport</keyword>
<feature type="chain" id="PRO_0000159176" description="Ferredoxin">
    <location>
        <begin position="1"/>
        <end position="107"/>
    </location>
</feature>
<feature type="domain" description="4Fe-4S ferredoxin-type 1" evidence="2">
    <location>
        <begin position="8"/>
        <end position="37"/>
    </location>
</feature>
<feature type="domain" description="4Fe-4S ferredoxin-type 2" evidence="2">
    <location>
        <begin position="38"/>
        <end position="67"/>
    </location>
</feature>
<feature type="binding site" evidence="1">
    <location>
        <position position="17"/>
    </location>
    <ligand>
        <name>[4Fe-4S] cluster</name>
        <dbReference type="ChEBI" id="CHEBI:49883"/>
    </ligand>
</feature>
<feature type="binding site" evidence="1">
    <location>
        <position position="20"/>
    </location>
    <ligand>
        <name>[4Fe-4S] cluster</name>
        <dbReference type="ChEBI" id="CHEBI:49883"/>
    </ligand>
</feature>
<feature type="binding site" evidence="1">
    <location>
        <position position="23"/>
    </location>
    <ligand>
        <name>[4Fe-4S] cluster</name>
        <dbReference type="ChEBI" id="CHEBI:49883"/>
    </ligand>
</feature>
<feature type="binding site" evidence="1">
    <location>
        <position position="27"/>
    </location>
    <ligand>
        <name>[3Fe-4S] cluster</name>
        <dbReference type="ChEBI" id="CHEBI:21137"/>
    </ligand>
</feature>
<feature type="binding site" evidence="1">
    <location>
        <position position="47"/>
    </location>
    <ligand>
        <name>[3Fe-4S] cluster</name>
        <dbReference type="ChEBI" id="CHEBI:21137"/>
    </ligand>
</feature>
<feature type="binding site" evidence="1">
    <location>
        <position position="53"/>
    </location>
    <ligand>
        <name>[3Fe-4S] cluster</name>
        <dbReference type="ChEBI" id="CHEBI:21137"/>
    </ligand>
</feature>
<feature type="binding site" evidence="1">
    <location>
        <position position="57"/>
    </location>
    <ligand>
        <name>[4Fe-4S] cluster</name>
        <dbReference type="ChEBI" id="CHEBI:49883"/>
    </ligand>
</feature>
<feature type="sequence conflict" description="In Ref. 2; AA sequence." evidence="4" ref="2">
    <original>N</original>
    <variation>D</variation>
    <location>
        <position position="37"/>
    </location>
</feature>
<feature type="sequence conflict" description="In Ref. 2; AA sequence." evidence="4" ref="2">
    <original>K</original>
    <variation>R</variation>
    <location>
        <position position="91"/>
    </location>
</feature>
<feature type="sequence conflict" description="In Ref. 2; AA sequence." evidence="4" ref="2">
    <original>K</original>
    <variation>R</variation>
    <location>
        <position position="99"/>
    </location>
</feature>
<evidence type="ECO:0000250" key="1"/>
<evidence type="ECO:0000255" key="2">
    <source>
        <dbReference type="PROSITE-ProRule" id="PRU00711"/>
    </source>
</evidence>
<evidence type="ECO:0000269" key="3">
    <source>
    </source>
</evidence>
<evidence type="ECO:0000305" key="4"/>
<reference key="1">
    <citation type="submission" date="2006-12" db="EMBL/GenBank/DDBJ databases">
        <title>Complete sequence of Pyrobaculum islandicum DSM 4184.</title>
        <authorList>
            <person name="Copeland A."/>
            <person name="Lucas S."/>
            <person name="Lapidus A."/>
            <person name="Barry K."/>
            <person name="Detter J.C."/>
            <person name="Glavina del Rio T."/>
            <person name="Dalin E."/>
            <person name="Tice H."/>
            <person name="Pitluck S."/>
            <person name="Meincke L."/>
            <person name="Brettin T."/>
            <person name="Bruce D."/>
            <person name="Han C."/>
            <person name="Tapia R."/>
            <person name="Gilna P."/>
            <person name="Schmutz J."/>
            <person name="Larimer F."/>
            <person name="Land M."/>
            <person name="Hauser L."/>
            <person name="Kyrpides N."/>
            <person name="Mikhailova N."/>
            <person name="Cozen A.E."/>
            <person name="Fitz-Gibbon S.T."/>
            <person name="House C.H."/>
            <person name="Saltikov C."/>
            <person name="Lowe T."/>
            <person name="Richardson P."/>
        </authorList>
    </citation>
    <scope>NUCLEOTIDE SEQUENCE [LARGE SCALE GENOMIC DNA]</scope>
    <source>
        <strain>DSM 4184 / JCM 9189 / GEO3</strain>
    </source>
</reference>
<reference key="2">
    <citation type="journal article" date="1998" name="J. Biochem.">
        <title>Purification and characterization of a [3Fe-4S][4Fe-4S] type ferredoxin from hyperthermophilic archaeon, Pyrobaculum islandicum.</title>
        <authorList>
            <person name="Nakajima Y."/>
            <person name="Fujiwara T."/>
            <person name="Fukumori Y."/>
        </authorList>
    </citation>
    <scope>PROTEIN SEQUENCE OF 4-104</scope>
    <scope>CHARACTERIZATION</scope>
    <scope>MASS SPECTROMETRY</scope>
</reference>
<comment type="function">
    <text>Ferredoxins are iron-sulfur proteins that transfer electrons in a wide variety of metabolic reactions.</text>
</comment>
<comment type="cofactor">
    <cofactor>
        <name>[4Fe-4S] cluster</name>
        <dbReference type="ChEBI" id="CHEBI:49883"/>
    </cofactor>
    <text>Binds 1 [4Fe-4S] cluster.</text>
</comment>
<comment type="cofactor">
    <cofactor>
        <name>[3Fe-4S] cluster</name>
        <dbReference type="ChEBI" id="CHEBI:21137"/>
    </cofactor>
    <text>Binds 1 [3Fe-4S] cluster.</text>
</comment>
<comment type="subunit">
    <text>Monomer.</text>
</comment>
<comment type="PTM">
    <text>The N-terminus is blocked.</text>
</comment>
<comment type="mass spectrometry" mass="11910.0" error="50.0" method="MALDI" evidence="3"/>
<comment type="miscellaneous">
    <text>Has a maximum absorption at about 282 nm.</text>
</comment>
<dbReference type="EMBL" id="CP000504">
    <property type="protein sequence ID" value="ABL89051.1"/>
    <property type="molecule type" value="Genomic_DNA"/>
</dbReference>
<dbReference type="RefSeq" id="WP_011763626.1">
    <property type="nucleotide sequence ID" value="NC_008701.1"/>
</dbReference>
<dbReference type="SMR" id="P81901"/>
<dbReference type="STRING" id="384616.Pisl_1904"/>
<dbReference type="GeneID" id="4616336"/>
<dbReference type="KEGG" id="pis:Pisl_1904"/>
<dbReference type="eggNOG" id="arCOG00291">
    <property type="taxonomic scope" value="Archaea"/>
</dbReference>
<dbReference type="HOGENOM" id="CLU_153636_0_0_2"/>
<dbReference type="OrthoDB" id="23833at2157"/>
<dbReference type="Proteomes" id="UP000002595">
    <property type="component" value="Chromosome"/>
</dbReference>
<dbReference type="GO" id="GO:0051538">
    <property type="term" value="F:3 iron, 4 sulfur cluster binding"/>
    <property type="evidence" value="ECO:0007669"/>
    <property type="project" value="UniProtKB-KW"/>
</dbReference>
<dbReference type="GO" id="GO:0051539">
    <property type="term" value="F:4 iron, 4 sulfur cluster binding"/>
    <property type="evidence" value="ECO:0007669"/>
    <property type="project" value="UniProtKB-KW"/>
</dbReference>
<dbReference type="GO" id="GO:0046872">
    <property type="term" value="F:metal ion binding"/>
    <property type="evidence" value="ECO:0007669"/>
    <property type="project" value="UniProtKB-KW"/>
</dbReference>
<dbReference type="GO" id="GO:0016491">
    <property type="term" value="F:oxidoreductase activity"/>
    <property type="evidence" value="ECO:0007669"/>
    <property type="project" value="UniProtKB-ARBA"/>
</dbReference>
<dbReference type="Gene3D" id="3.30.70.20">
    <property type="match status" value="1"/>
</dbReference>
<dbReference type="InterPro" id="IPR017896">
    <property type="entry name" value="4Fe4S_Fe-S-bd"/>
</dbReference>
<dbReference type="InterPro" id="IPR017900">
    <property type="entry name" value="4Fe4S_Fe_S_CS"/>
</dbReference>
<dbReference type="InterPro" id="IPR050572">
    <property type="entry name" value="Fe-S_Ferredoxin"/>
</dbReference>
<dbReference type="PANTHER" id="PTHR43687">
    <property type="entry name" value="ADENYLYLSULFATE REDUCTASE, BETA SUBUNIT"/>
    <property type="match status" value="1"/>
</dbReference>
<dbReference type="PANTHER" id="PTHR43687:SF6">
    <property type="entry name" value="L-ASPARTATE SEMIALDEHYDE SULFURTRANSFERASE IRON-SULFUR SUBUNIT"/>
    <property type="match status" value="1"/>
</dbReference>
<dbReference type="Pfam" id="PF13237">
    <property type="entry name" value="Fer4_10"/>
    <property type="match status" value="1"/>
</dbReference>
<dbReference type="SUPFAM" id="SSF54862">
    <property type="entry name" value="4Fe-4S ferredoxins"/>
    <property type="match status" value="1"/>
</dbReference>
<dbReference type="PROSITE" id="PS00198">
    <property type="entry name" value="4FE4S_FER_1"/>
    <property type="match status" value="1"/>
</dbReference>
<dbReference type="PROSITE" id="PS51379">
    <property type="entry name" value="4FE4S_FER_2"/>
    <property type="match status" value="2"/>
</dbReference>
<sequence length="107" mass="11882">MAELAKYERVVIDQDICISCGACVAACPYQALELDENGKSRLIWEKCKDDFSCVAVCPVKAISKASEATPEAKAKKGWYRFGKSLTPEEQKAFEEWKTKYGITAPPV</sequence>
<organism>
    <name type="scientific">Pyrobaculum islandicum (strain DSM 4184 / JCM 9189 / GEO3)</name>
    <dbReference type="NCBI Taxonomy" id="384616"/>
    <lineage>
        <taxon>Archaea</taxon>
        <taxon>Thermoproteota</taxon>
        <taxon>Thermoprotei</taxon>
        <taxon>Thermoproteales</taxon>
        <taxon>Thermoproteaceae</taxon>
        <taxon>Pyrobaculum</taxon>
    </lineage>
</organism>
<accession>P81901</accession>
<accession>A1RVR9</accession>
<proteinExistence type="evidence at protein level"/>